<name>HIS3_SACEN</name>
<proteinExistence type="inferred from homology"/>
<accession>A4FLL5</accession>
<gene>
    <name evidence="1" type="primary">hisI</name>
    <name type="ordered locus">SACE_5755</name>
</gene>
<dbReference type="EC" id="3.5.4.19" evidence="1"/>
<dbReference type="EMBL" id="AM420293">
    <property type="protein sequence ID" value="CAM04940.1"/>
    <property type="molecule type" value="Genomic_DNA"/>
</dbReference>
<dbReference type="RefSeq" id="WP_009948071.1">
    <property type="nucleotide sequence ID" value="NC_009142.1"/>
</dbReference>
<dbReference type="SMR" id="A4FLL5"/>
<dbReference type="STRING" id="405948.SACE_5755"/>
<dbReference type="KEGG" id="sen:SACE_5755"/>
<dbReference type="eggNOG" id="COG0139">
    <property type="taxonomic scope" value="Bacteria"/>
</dbReference>
<dbReference type="HOGENOM" id="CLU_048577_5_1_11"/>
<dbReference type="OrthoDB" id="9795769at2"/>
<dbReference type="UniPathway" id="UPA00031">
    <property type="reaction ID" value="UER00008"/>
</dbReference>
<dbReference type="Proteomes" id="UP000006728">
    <property type="component" value="Chromosome"/>
</dbReference>
<dbReference type="GO" id="GO:0005737">
    <property type="term" value="C:cytoplasm"/>
    <property type="evidence" value="ECO:0007669"/>
    <property type="project" value="UniProtKB-SubCell"/>
</dbReference>
<dbReference type="GO" id="GO:0000287">
    <property type="term" value="F:magnesium ion binding"/>
    <property type="evidence" value="ECO:0007669"/>
    <property type="project" value="UniProtKB-UniRule"/>
</dbReference>
<dbReference type="GO" id="GO:0004635">
    <property type="term" value="F:phosphoribosyl-AMP cyclohydrolase activity"/>
    <property type="evidence" value="ECO:0007669"/>
    <property type="project" value="UniProtKB-UniRule"/>
</dbReference>
<dbReference type="GO" id="GO:0008270">
    <property type="term" value="F:zinc ion binding"/>
    <property type="evidence" value="ECO:0007669"/>
    <property type="project" value="UniProtKB-UniRule"/>
</dbReference>
<dbReference type="GO" id="GO:0000105">
    <property type="term" value="P:L-histidine biosynthetic process"/>
    <property type="evidence" value="ECO:0007669"/>
    <property type="project" value="UniProtKB-UniRule"/>
</dbReference>
<dbReference type="FunFam" id="3.10.20.810:FF:000001">
    <property type="entry name" value="Histidine biosynthesis bifunctional protein HisIE"/>
    <property type="match status" value="1"/>
</dbReference>
<dbReference type="Gene3D" id="3.10.20.810">
    <property type="entry name" value="Phosphoribosyl-AMP cyclohydrolase"/>
    <property type="match status" value="1"/>
</dbReference>
<dbReference type="HAMAP" id="MF_01021">
    <property type="entry name" value="HisI"/>
    <property type="match status" value="1"/>
</dbReference>
<dbReference type="InterPro" id="IPR026660">
    <property type="entry name" value="PRA-CH"/>
</dbReference>
<dbReference type="InterPro" id="IPR002496">
    <property type="entry name" value="PRib_AMP_CycHydrolase_dom"/>
</dbReference>
<dbReference type="InterPro" id="IPR038019">
    <property type="entry name" value="PRib_AMP_CycHydrolase_sf"/>
</dbReference>
<dbReference type="NCBIfam" id="NF000768">
    <property type="entry name" value="PRK00051.1"/>
    <property type="match status" value="1"/>
</dbReference>
<dbReference type="PANTHER" id="PTHR42945">
    <property type="entry name" value="HISTIDINE BIOSYNTHESIS BIFUNCTIONAL PROTEIN"/>
    <property type="match status" value="1"/>
</dbReference>
<dbReference type="PANTHER" id="PTHR42945:SF11">
    <property type="entry name" value="PHOSPHORIBOSYL-AMP CYCLOHYDROLASE"/>
    <property type="match status" value="1"/>
</dbReference>
<dbReference type="Pfam" id="PF01502">
    <property type="entry name" value="PRA-CH"/>
    <property type="match status" value="1"/>
</dbReference>
<dbReference type="SUPFAM" id="SSF141734">
    <property type="entry name" value="HisI-like"/>
    <property type="match status" value="1"/>
</dbReference>
<evidence type="ECO:0000255" key="1">
    <source>
        <dbReference type="HAMAP-Rule" id="MF_01021"/>
    </source>
</evidence>
<feature type="chain" id="PRO_0000319717" description="Phosphoribosyl-AMP cyclohydrolase">
    <location>
        <begin position="1"/>
        <end position="116"/>
    </location>
</feature>
<feature type="binding site" evidence="1">
    <location>
        <position position="82"/>
    </location>
    <ligand>
        <name>Mg(2+)</name>
        <dbReference type="ChEBI" id="CHEBI:18420"/>
    </ligand>
</feature>
<feature type="binding site" evidence="1">
    <location>
        <position position="83"/>
    </location>
    <ligand>
        <name>Zn(2+)</name>
        <dbReference type="ChEBI" id="CHEBI:29105"/>
        <note>ligand shared between dimeric partners</note>
    </ligand>
</feature>
<feature type="binding site" evidence="1">
    <location>
        <position position="84"/>
    </location>
    <ligand>
        <name>Mg(2+)</name>
        <dbReference type="ChEBI" id="CHEBI:18420"/>
    </ligand>
</feature>
<feature type="binding site" evidence="1">
    <location>
        <position position="86"/>
    </location>
    <ligand>
        <name>Mg(2+)</name>
        <dbReference type="ChEBI" id="CHEBI:18420"/>
    </ligand>
</feature>
<feature type="binding site" evidence="1">
    <location>
        <position position="99"/>
    </location>
    <ligand>
        <name>Zn(2+)</name>
        <dbReference type="ChEBI" id="CHEBI:29105"/>
        <note>ligand shared between dimeric partners</note>
    </ligand>
</feature>
<feature type="binding site" evidence="1">
    <location>
        <position position="106"/>
    </location>
    <ligand>
        <name>Zn(2+)</name>
        <dbReference type="ChEBI" id="CHEBI:29105"/>
        <note>ligand shared between dimeric partners</note>
    </ligand>
</feature>
<protein>
    <recommendedName>
        <fullName evidence="1">Phosphoribosyl-AMP cyclohydrolase</fullName>
        <shortName evidence="1">PRA-CH</shortName>
        <ecNumber evidence="1">3.5.4.19</ecNumber>
    </recommendedName>
</protein>
<keyword id="KW-0028">Amino-acid biosynthesis</keyword>
<keyword id="KW-0963">Cytoplasm</keyword>
<keyword id="KW-0368">Histidine biosynthesis</keyword>
<keyword id="KW-0378">Hydrolase</keyword>
<keyword id="KW-0460">Magnesium</keyword>
<keyword id="KW-0479">Metal-binding</keyword>
<keyword id="KW-1185">Reference proteome</keyword>
<keyword id="KW-0862">Zinc</keyword>
<reference key="1">
    <citation type="journal article" date="2007" name="Nat. Biotechnol.">
        <title>Complete genome sequence of the erythromycin-producing bacterium Saccharopolyspora erythraea NRRL23338.</title>
        <authorList>
            <person name="Oliynyk M."/>
            <person name="Samborskyy M."/>
            <person name="Lester J.B."/>
            <person name="Mironenko T."/>
            <person name="Scott N."/>
            <person name="Dickens S."/>
            <person name="Haydock S.F."/>
            <person name="Leadlay P.F."/>
        </authorList>
    </citation>
    <scope>NUCLEOTIDE SEQUENCE [LARGE SCALE GENOMIC DNA]</scope>
    <source>
        <strain>ATCC 11635 / DSM 40517 / JCM 4748 / NBRC 13426 / NCIMB 8594 / NRRL 2338</strain>
    </source>
</reference>
<sequence>MSSGLDPAIAARLKRTPDGLVAAVAQQRGTGEVLMMAWMDDEALHRTLTTRKGTYYSRSRQQYWVKGETSGHTQHVHEVRLDCDGDTVLLVVDQVDGACHTGDRTCFDADVLLAES</sequence>
<organism>
    <name type="scientific">Saccharopolyspora erythraea (strain ATCC 11635 / DSM 40517 / JCM 4748 / NBRC 13426 / NCIMB 8594 / NRRL 2338)</name>
    <dbReference type="NCBI Taxonomy" id="405948"/>
    <lineage>
        <taxon>Bacteria</taxon>
        <taxon>Bacillati</taxon>
        <taxon>Actinomycetota</taxon>
        <taxon>Actinomycetes</taxon>
        <taxon>Pseudonocardiales</taxon>
        <taxon>Pseudonocardiaceae</taxon>
        <taxon>Saccharopolyspora</taxon>
    </lineage>
</organism>
<comment type="function">
    <text evidence="1">Catalyzes the hydrolysis of the adenine ring of phosphoribosyl-AMP.</text>
</comment>
<comment type="catalytic activity">
    <reaction evidence="1">
        <text>1-(5-phospho-beta-D-ribosyl)-5'-AMP + H2O = 1-(5-phospho-beta-D-ribosyl)-5-[(5-phospho-beta-D-ribosylamino)methylideneamino]imidazole-4-carboxamide</text>
        <dbReference type="Rhea" id="RHEA:20049"/>
        <dbReference type="ChEBI" id="CHEBI:15377"/>
        <dbReference type="ChEBI" id="CHEBI:58435"/>
        <dbReference type="ChEBI" id="CHEBI:59457"/>
        <dbReference type="EC" id="3.5.4.19"/>
    </reaction>
</comment>
<comment type="cofactor">
    <cofactor evidence="1">
        <name>Mg(2+)</name>
        <dbReference type="ChEBI" id="CHEBI:18420"/>
    </cofactor>
    <text evidence="1">Binds 1 Mg(2+) ion per subunit.</text>
</comment>
<comment type="cofactor">
    <cofactor evidence="1">
        <name>Zn(2+)</name>
        <dbReference type="ChEBI" id="CHEBI:29105"/>
    </cofactor>
    <text evidence="1">Binds 1 zinc ion per subunit.</text>
</comment>
<comment type="pathway">
    <text evidence="1">Amino-acid biosynthesis; L-histidine biosynthesis; L-histidine from 5-phospho-alpha-D-ribose 1-diphosphate: step 3/9.</text>
</comment>
<comment type="subunit">
    <text evidence="1">Homodimer.</text>
</comment>
<comment type="subcellular location">
    <subcellularLocation>
        <location evidence="1">Cytoplasm</location>
    </subcellularLocation>
</comment>
<comment type="similarity">
    <text evidence="1">Belongs to the PRA-CH family.</text>
</comment>